<comment type="function">
    <text evidence="1">Specifically methylates the guanine in position 1835 (m2G1835) of 23S rRNA.</text>
</comment>
<comment type="catalytic activity">
    <reaction evidence="1">
        <text>guanosine(1835) in 23S rRNA + S-adenosyl-L-methionine = N(2)-methylguanosine(1835) in 23S rRNA + S-adenosyl-L-homocysteine + H(+)</text>
        <dbReference type="Rhea" id="RHEA:42744"/>
        <dbReference type="Rhea" id="RHEA-COMP:10217"/>
        <dbReference type="Rhea" id="RHEA-COMP:10218"/>
        <dbReference type="ChEBI" id="CHEBI:15378"/>
        <dbReference type="ChEBI" id="CHEBI:57856"/>
        <dbReference type="ChEBI" id="CHEBI:59789"/>
        <dbReference type="ChEBI" id="CHEBI:74269"/>
        <dbReference type="ChEBI" id="CHEBI:74481"/>
        <dbReference type="EC" id="2.1.1.174"/>
    </reaction>
</comment>
<comment type="subcellular location">
    <subcellularLocation>
        <location evidence="1">Cytoplasm</location>
    </subcellularLocation>
</comment>
<comment type="similarity">
    <text evidence="1">Belongs to the methyltransferase superfamily. RlmG family.</text>
</comment>
<dbReference type="EC" id="2.1.1.174" evidence="1"/>
<dbReference type="EMBL" id="CP000308">
    <property type="protein sequence ID" value="ABG15162.1"/>
    <property type="molecule type" value="Genomic_DNA"/>
</dbReference>
<dbReference type="PIR" id="AB0073">
    <property type="entry name" value="AB0073"/>
</dbReference>
<dbReference type="RefSeq" id="WP_002210402.1">
    <property type="nucleotide sequence ID" value="NZ_CP009906.1"/>
</dbReference>
<dbReference type="SMR" id="Q1C310"/>
<dbReference type="GeneID" id="57974028"/>
<dbReference type="KEGG" id="ypa:YPA_3200"/>
<dbReference type="Proteomes" id="UP000001971">
    <property type="component" value="Chromosome"/>
</dbReference>
<dbReference type="GO" id="GO:0005737">
    <property type="term" value="C:cytoplasm"/>
    <property type="evidence" value="ECO:0007669"/>
    <property type="project" value="UniProtKB-SubCell"/>
</dbReference>
<dbReference type="GO" id="GO:0052916">
    <property type="term" value="F:23S rRNA (guanine(1835)-N(2))-methyltransferase activity"/>
    <property type="evidence" value="ECO:0007669"/>
    <property type="project" value="UniProtKB-EC"/>
</dbReference>
<dbReference type="GO" id="GO:0003676">
    <property type="term" value="F:nucleic acid binding"/>
    <property type="evidence" value="ECO:0007669"/>
    <property type="project" value="InterPro"/>
</dbReference>
<dbReference type="CDD" id="cd02440">
    <property type="entry name" value="AdoMet_MTases"/>
    <property type="match status" value="1"/>
</dbReference>
<dbReference type="Gene3D" id="3.40.50.150">
    <property type="entry name" value="Vaccinia Virus protein VP39"/>
    <property type="match status" value="2"/>
</dbReference>
<dbReference type="HAMAP" id="MF_01859">
    <property type="entry name" value="23SrRNA_methyltr_G"/>
    <property type="match status" value="1"/>
</dbReference>
<dbReference type="InterPro" id="IPR002052">
    <property type="entry name" value="DNA_methylase_N6_adenine_CS"/>
</dbReference>
<dbReference type="InterPro" id="IPR017237">
    <property type="entry name" value="rRNA_m2G-MeTrfase_RlmG"/>
</dbReference>
<dbReference type="InterPro" id="IPR046977">
    <property type="entry name" value="RsmC/RlmG"/>
</dbReference>
<dbReference type="InterPro" id="IPR029063">
    <property type="entry name" value="SAM-dependent_MTases_sf"/>
</dbReference>
<dbReference type="InterPro" id="IPR007848">
    <property type="entry name" value="Small_mtfrase_dom"/>
</dbReference>
<dbReference type="NCBIfam" id="NF011577">
    <property type="entry name" value="PRK15001.1"/>
    <property type="match status" value="1"/>
</dbReference>
<dbReference type="PANTHER" id="PTHR47816:SF5">
    <property type="entry name" value="RIBOSOMAL RNA LARGE SUBUNIT METHYLTRANSFERASE G"/>
    <property type="match status" value="1"/>
</dbReference>
<dbReference type="PANTHER" id="PTHR47816">
    <property type="entry name" value="RIBOSOMAL RNA SMALL SUBUNIT METHYLTRANSFERASE C"/>
    <property type="match status" value="1"/>
</dbReference>
<dbReference type="Pfam" id="PF05175">
    <property type="entry name" value="MTS"/>
    <property type="match status" value="1"/>
</dbReference>
<dbReference type="PIRSF" id="PIRSF037565">
    <property type="entry name" value="RRNA_m2G_Mtase_RsmD_prd"/>
    <property type="match status" value="1"/>
</dbReference>
<dbReference type="SUPFAM" id="SSF53335">
    <property type="entry name" value="S-adenosyl-L-methionine-dependent methyltransferases"/>
    <property type="match status" value="1"/>
</dbReference>
<organism>
    <name type="scientific">Yersinia pestis bv. Antiqua (strain Antiqua)</name>
    <dbReference type="NCBI Taxonomy" id="360102"/>
    <lineage>
        <taxon>Bacteria</taxon>
        <taxon>Pseudomonadati</taxon>
        <taxon>Pseudomonadota</taxon>
        <taxon>Gammaproteobacteria</taxon>
        <taxon>Enterobacterales</taxon>
        <taxon>Yersiniaceae</taxon>
        <taxon>Yersinia</taxon>
    </lineage>
</organism>
<gene>
    <name evidence="1" type="primary">rlmG</name>
    <name type="ordered locus">YPA_3200</name>
</gene>
<reference key="1">
    <citation type="journal article" date="2006" name="J. Bacteriol.">
        <title>Complete genome sequence of Yersinia pestis strains Antiqua and Nepal516: evidence of gene reduction in an emerging pathogen.</title>
        <authorList>
            <person name="Chain P.S.G."/>
            <person name="Hu P."/>
            <person name="Malfatti S.A."/>
            <person name="Radnedge L."/>
            <person name="Larimer F."/>
            <person name="Vergez L.M."/>
            <person name="Worsham P."/>
            <person name="Chu M.C."/>
            <person name="Andersen G.L."/>
        </authorList>
    </citation>
    <scope>NUCLEOTIDE SEQUENCE [LARGE SCALE GENOMIC DNA]</scope>
    <source>
        <strain>Antiqua</strain>
    </source>
</reference>
<proteinExistence type="inferred from homology"/>
<name>RLMG_YERPA</name>
<sequence>MSQLDLGTQSLELERFPPQENSNTLQAWEAADEYLLQNIDLSQIDGRPVLVFNDQFGTLACALHAYRPFSSSDSYMSQLATAHNLRLNHLDESAVTLLSSVDDLPEAPKLVVIKIPKALALLEHQLRALRRVVAPDTVIIAGAKSRDVHNSTLQLFEKILGPTKTTLAWKKARLIHCEVADIPLADAPETIDWPLPNTDYIIHNHANVFSRNNLDIGARFFMEILPYDVTGKIADLGCGNGVVGLIALEQNPLAEMLFVDESYMAVASSELNITVNRPQDLSRCEFMVSHGLAGVERESLQLVLCNPPFHQQHAVSDHVAWQMFCDAKRCLKAGGELMIVGNRHLDYFHKLKRLFGNCETLDSNQKFMVLKSVKQASSRSEGGGSGSLDMSYSDF</sequence>
<protein>
    <recommendedName>
        <fullName evidence="1">Ribosomal RNA large subunit methyltransferase G</fullName>
        <ecNumber evidence="1">2.1.1.174</ecNumber>
    </recommendedName>
    <alternativeName>
        <fullName evidence="1">23S rRNA m2G1835 methyltransferase</fullName>
    </alternativeName>
    <alternativeName>
        <fullName evidence="1">rRNA (guanine-N(2)-)-methyltransferase RlmG</fullName>
    </alternativeName>
</protein>
<accession>Q1C310</accession>
<keyword id="KW-0963">Cytoplasm</keyword>
<keyword id="KW-0489">Methyltransferase</keyword>
<keyword id="KW-0698">rRNA processing</keyword>
<keyword id="KW-0949">S-adenosyl-L-methionine</keyword>
<keyword id="KW-0808">Transferase</keyword>
<feature type="chain" id="PRO_0000366542" description="Ribosomal RNA large subunit methyltransferase G">
    <location>
        <begin position="1"/>
        <end position="395"/>
    </location>
</feature>
<evidence type="ECO:0000255" key="1">
    <source>
        <dbReference type="HAMAP-Rule" id="MF_01859"/>
    </source>
</evidence>